<name>CH60_CHLT2</name>
<organism>
    <name type="scientific">Chlamydia trachomatis serovar L2 (strain ATCC VR-902B / DSM 19102 / 434/Bu)</name>
    <dbReference type="NCBI Taxonomy" id="471472"/>
    <lineage>
        <taxon>Bacteria</taxon>
        <taxon>Pseudomonadati</taxon>
        <taxon>Chlamydiota</taxon>
        <taxon>Chlamydiia</taxon>
        <taxon>Chlamydiales</taxon>
        <taxon>Chlamydiaceae</taxon>
        <taxon>Chlamydia/Chlamydophila group</taxon>
        <taxon>Chlamydia</taxon>
    </lineage>
</organism>
<reference key="1">
    <citation type="journal article" date="2008" name="Genome Res.">
        <title>Chlamydia trachomatis: genome sequence analysis of lymphogranuloma venereum isolates.</title>
        <authorList>
            <person name="Thomson N.R."/>
            <person name="Holden M.T.G."/>
            <person name="Carder C."/>
            <person name="Lennard N."/>
            <person name="Lockey S.J."/>
            <person name="Marsh P."/>
            <person name="Skipp P."/>
            <person name="O'Connor C.D."/>
            <person name="Goodhead I."/>
            <person name="Norbertzcak H."/>
            <person name="Harris B."/>
            <person name="Ormond D."/>
            <person name="Rance R."/>
            <person name="Quail M.A."/>
            <person name="Parkhill J."/>
            <person name="Stephens R.S."/>
            <person name="Clarke I.N."/>
        </authorList>
    </citation>
    <scope>NUCLEOTIDE SEQUENCE [LARGE SCALE GENOMIC DNA]</scope>
    <source>
        <strain>ATCC VR-902B / DSM 19102 / 434/Bu</strain>
    </source>
</reference>
<dbReference type="EC" id="5.6.1.7" evidence="1"/>
<dbReference type="EMBL" id="AM884176">
    <property type="protein sequence ID" value="CAP03805.1"/>
    <property type="molecule type" value="Genomic_DNA"/>
</dbReference>
<dbReference type="RefSeq" id="WP_009873565.1">
    <property type="nucleotide sequence ID" value="NC_010287.1"/>
</dbReference>
<dbReference type="RefSeq" id="YP_001654449.1">
    <property type="nucleotide sequence ID" value="NC_010287.1"/>
</dbReference>
<dbReference type="SMR" id="B0B9L8"/>
<dbReference type="KEGG" id="ctb:CTL0365"/>
<dbReference type="PATRIC" id="fig|471472.4.peg.394"/>
<dbReference type="HOGENOM" id="CLU_016503_3_0_0"/>
<dbReference type="Proteomes" id="UP001154402">
    <property type="component" value="Chromosome"/>
</dbReference>
<dbReference type="GO" id="GO:0005737">
    <property type="term" value="C:cytoplasm"/>
    <property type="evidence" value="ECO:0007669"/>
    <property type="project" value="UniProtKB-SubCell"/>
</dbReference>
<dbReference type="GO" id="GO:0005524">
    <property type="term" value="F:ATP binding"/>
    <property type="evidence" value="ECO:0007669"/>
    <property type="project" value="UniProtKB-UniRule"/>
</dbReference>
<dbReference type="GO" id="GO:0140662">
    <property type="term" value="F:ATP-dependent protein folding chaperone"/>
    <property type="evidence" value="ECO:0007669"/>
    <property type="project" value="InterPro"/>
</dbReference>
<dbReference type="GO" id="GO:0016853">
    <property type="term" value="F:isomerase activity"/>
    <property type="evidence" value="ECO:0007669"/>
    <property type="project" value="UniProtKB-KW"/>
</dbReference>
<dbReference type="GO" id="GO:0051082">
    <property type="term" value="F:unfolded protein binding"/>
    <property type="evidence" value="ECO:0007669"/>
    <property type="project" value="UniProtKB-UniRule"/>
</dbReference>
<dbReference type="GO" id="GO:0042026">
    <property type="term" value="P:protein refolding"/>
    <property type="evidence" value="ECO:0007669"/>
    <property type="project" value="UniProtKB-UniRule"/>
</dbReference>
<dbReference type="CDD" id="cd03344">
    <property type="entry name" value="GroEL"/>
    <property type="match status" value="1"/>
</dbReference>
<dbReference type="FunFam" id="1.10.560.10:FF:000001">
    <property type="entry name" value="60 kDa chaperonin"/>
    <property type="match status" value="1"/>
</dbReference>
<dbReference type="FunFam" id="3.50.7.10:FF:000001">
    <property type="entry name" value="60 kDa chaperonin"/>
    <property type="match status" value="1"/>
</dbReference>
<dbReference type="Gene3D" id="3.50.7.10">
    <property type="entry name" value="GroEL"/>
    <property type="match status" value="1"/>
</dbReference>
<dbReference type="Gene3D" id="1.10.560.10">
    <property type="entry name" value="GroEL-like equatorial domain"/>
    <property type="match status" value="1"/>
</dbReference>
<dbReference type="Gene3D" id="3.30.260.10">
    <property type="entry name" value="TCP-1-like chaperonin intermediate domain"/>
    <property type="match status" value="1"/>
</dbReference>
<dbReference type="HAMAP" id="MF_00600">
    <property type="entry name" value="CH60"/>
    <property type="match status" value="1"/>
</dbReference>
<dbReference type="InterPro" id="IPR018370">
    <property type="entry name" value="Chaperonin_Cpn60_CS"/>
</dbReference>
<dbReference type="InterPro" id="IPR001844">
    <property type="entry name" value="Cpn60/GroEL"/>
</dbReference>
<dbReference type="InterPro" id="IPR002423">
    <property type="entry name" value="Cpn60/GroEL/TCP-1"/>
</dbReference>
<dbReference type="InterPro" id="IPR027409">
    <property type="entry name" value="GroEL-like_apical_dom_sf"/>
</dbReference>
<dbReference type="InterPro" id="IPR027413">
    <property type="entry name" value="GROEL-like_equatorial_sf"/>
</dbReference>
<dbReference type="InterPro" id="IPR027410">
    <property type="entry name" value="TCP-1-like_intermed_sf"/>
</dbReference>
<dbReference type="NCBIfam" id="TIGR02348">
    <property type="entry name" value="GroEL"/>
    <property type="match status" value="1"/>
</dbReference>
<dbReference type="NCBIfam" id="NF000592">
    <property type="entry name" value="PRK00013.1"/>
    <property type="match status" value="1"/>
</dbReference>
<dbReference type="NCBIfam" id="NF009487">
    <property type="entry name" value="PRK12849.1"/>
    <property type="match status" value="1"/>
</dbReference>
<dbReference type="NCBIfam" id="NF009488">
    <property type="entry name" value="PRK12850.1"/>
    <property type="match status" value="1"/>
</dbReference>
<dbReference type="NCBIfam" id="NF009489">
    <property type="entry name" value="PRK12851.1"/>
    <property type="match status" value="1"/>
</dbReference>
<dbReference type="PANTHER" id="PTHR45633">
    <property type="entry name" value="60 KDA HEAT SHOCK PROTEIN, MITOCHONDRIAL"/>
    <property type="match status" value="1"/>
</dbReference>
<dbReference type="Pfam" id="PF00118">
    <property type="entry name" value="Cpn60_TCP1"/>
    <property type="match status" value="1"/>
</dbReference>
<dbReference type="PRINTS" id="PR00298">
    <property type="entry name" value="CHAPERONIN60"/>
</dbReference>
<dbReference type="SUPFAM" id="SSF52029">
    <property type="entry name" value="GroEL apical domain-like"/>
    <property type="match status" value="1"/>
</dbReference>
<dbReference type="SUPFAM" id="SSF48592">
    <property type="entry name" value="GroEL equatorial domain-like"/>
    <property type="match status" value="1"/>
</dbReference>
<dbReference type="SUPFAM" id="SSF54849">
    <property type="entry name" value="GroEL-intermediate domain like"/>
    <property type="match status" value="1"/>
</dbReference>
<dbReference type="PROSITE" id="PS00296">
    <property type="entry name" value="CHAPERONINS_CPN60"/>
    <property type="match status" value="1"/>
</dbReference>
<gene>
    <name evidence="1" type="primary">groEL</name>
    <name evidence="1" type="synonym">groL</name>
    <name type="ordered locus">CTL0365</name>
</gene>
<comment type="function">
    <text evidence="1">Together with its co-chaperonin GroES, plays an essential role in assisting protein folding. The GroEL-GroES system forms a nano-cage that allows encapsulation of the non-native substrate proteins and provides a physical environment optimized to promote and accelerate protein folding.</text>
</comment>
<comment type="catalytic activity">
    <reaction evidence="1">
        <text>ATP + H2O + a folded polypeptide = ADP + phosphate + an unfolded polypeptide.</text>
        <dbReference type="EC" id="5.6.1.7"/>
    </reaction>
</comment>
<comment type="subunit">
    <text evidence="1">Forms a cylinder of 14 subunits composed of two heptameric rings stacked back-to-back. Interacts with the co-chaperonin GroES.</text>
</comment>
<comment type="subcellular location">
    <subcellularLocation>
        <location evidence="1">Cytoplasm</location>
    </subcellularLocation>
</comment>
<comment type="similarity">
    <text evidence="1">Belongs to the chaperonin (HSP60) family.</text>
</comment>
<sequence>MVAKNIKYNEEARKKIQKGVKTLAEAVKVTLGPKGRHVVIDKSFGSPQVTKDGVTVAKEVELADKHENMGAQMVKEVASKTADKAGDGTTTATVLAEAIYTEGLRNVTAGANPMDLKRGIDKAVKVVVDQVKKISKPVQHHKEIAQVATISANNDAEIGNLIAEAMEKVGKNGSITVEEAKGFETVLDVVEGMNFNRGYLSSYFATNPETQECVLEDALVLIYDKKISGIKDFLPVLQQVAESGRPLLIIAEDIEGEALATLVVNRIRGGFRVCAVKAPGFGDRRKAMLEDIAILTGGQLISEELGMKLENANLAMLGKAKKVIVSKEDTTIVEGMGEKEALEARCESIKKQIEDSSSDYDKEKLQERLAKLSGGVAVIRVGAATEIEMKEKKDRVDDAQHATIAAVEEGILPGGGTALIRCIPTLEAFLPMLTNEDEQIGARIVLKALSAPLKQIAANAGKEGAIIFQQVMSRSANEGYDALRDAYTDMLEAGILDPAKVTRSALESAASVAGLLLTTEALIAEIPEEKPAAAPAMPGAGMDY</sequence>
<protein>
    <recommendedName>
        <fullName evidence="1">Chaperonin GroEL</fullName>
        <ecNumber evidence="1">5.6.1.7</ecNumber>
    </recommendedName>
    <alternativeName>
        <fullName evidence="1">60 kDa chaperonin</fullName>
    </alternativeName>
    <alternativeName>
        <fullName evidence="1">Chaperonin-60</fullName>
        <shortName evidence="1">Cpn60</shortName>
    </alternativeName>
</protein>
<keyword id="KW-0067">ATP-binding</keyword>
<keyword id="KW-0143">Chaperone</keyword>
<keyword id="KW-0963">Cytoplasm</keyword>
<keyword id="KW-0413">Isomerase</keyword>
<keyword id="KW-0547">Nucleotide-binding</keyword>
<proteinExistence type="inferred from homology"/>
<accession>B0B9L8</accession>
<evidence type="ECO:0000255" key="1">
    <source>
        <dbReference type="HAMAP-Rule" id="MF_00600"/>
    </source>
</evidence>
<feature type="chain" id="PRO_1000129989" description="Chaperonin GroEL">
    <location>
        <begin position="1"/>
        <end position="544"/>
    </location>
</feature>
<feature type="binding site" evidence="1">
    <location>
        <begin position="30"/>
        <end position="33"/>
    </location>
    <ligand>
        <name>ATP</name>
        <dbReference type="ChEBI" id="CHEBI:30616"/>
    </ligand>
</feature>
<feature type="binding site" evidence="1">
    <location>
        <position position="51"/>
    </location>
    <ligand>
        <name>ATP</name>
        <dbReference type="ChEBI" id="CHEBI:30616"/>
    </ligand>
</feature>
<feature type="binding site" evidence="1">
    <location>
        <begin position="87"/>
        <end position="91"/>
    </location>
    <ligand>
        <name>ATP</name>
        <dbReference type="ChEBI" id="CHEBI:30616"/>
    </ligand>
</feature>
<feature type="binding site" evidence="1">
    <location>
        <position position="415"/>
    </location>
    <ligand>
        <name>ATP</name>
        <dbReference type="ChEBI" id="CHEBI:30616"/>
    </ligand>
</feature>
<feature type="binding site" evidence="1">
    <location>
        <begin position="481"/>
        <end position="483"/>
    </location>
    <ligand>
        <name>ATP</name>
        <dbReference type="ChEBI" id="CHEBI:30616"/>
    </ligand>
</feature>
<feature type="binding site" evidence="1">
    <location>
        <position position="497"/>
    </location>
    <ligand>
        <name>ATP</name>
        <dbReference type="ChEBI" id="CHEBI:30616"/>
    </ligand>
</feature>